<protein>
    <recommendedName>
        <fullName evidence="1">Tyrosine--tRNA ligase 2</fullName>
        <ecNumber evidence="1">6.1.1.1</ecNumber>
    </recommendedName>
    <alternativeName>
        <fullName evidence="1">Tyrosyl-tRNA synthetase 2</fullName>
        <shortName evidence="1">TyrRS 2</shortName>
    </alternativeName>
</protein>
<accession>Q81XC6</accession>
<accession>Q6HR61</accession>
<accession>Q6KKH8</accession>
<gene>
    <name evidence="1" type="primary">tyrS2</name>
    <name type="synonym">tyrS-2</name>
    <name type="ordered locus">BA_5314</name>
    <name type="ordered locus">GBAA_5314</name>
    <name type="ordered locus">BAS4936</name>
</gene>
<comment type="function">
    <text evidence="1">Catalyzes the attachment of tyrosine to tRNA(Tyr) in a two-step reaction: tyrosine is first activated by ATP to form Tyr-AMP and then transferred to the acceptor end of tRNA(Tyr).</text>
</comment>
<comment type="catalytic activity">
    <reaction evidence="1">
        <text>tRNA(Tyr) + L-tyrosine + ATP = L-tyrosyl-tRNA(Tyr) + AMP + diphosphate + H(+)</text>
        <dbReference type="Rhea" id="RHEA:10220"/>
        <dbReference type="Rhea" id="RHEA-COMP:9706"/>
        <dbReference type="Rhea" id="RHEA-COMP:9707"/>
        <dbReference type="ChEBI" id="CHEBI:15378"/>
        <dbReference type="ChEBI" id="CHEBI:30616"/>
        <dbReference type="ChEBI" id="CHEBI:33019"/>
        <dbReference type="ChEBI" id="CHEBI:58315"/>
        <dbReference type="ChEBI" id="CHEBI:78442"/>
        <dbReference type="ChEBI" id="CHEBI:78536"/>
        <dbReference type="ChEBI" id="CHEBI:456215"/>
        <dbReference type="EC" id="6.1.1.1"/>
    </reaction>
</comment>
<comment type="subunit">
    <text evidence="1">Homodimer.</text>
</comment>
<comment type="subcellular location">
    <subcellularLocation>
        <location evidence="1">Cytoplasm</location>
    </subcellularLocation>
</comment>
<comment type="similarity">
    <text evidence="1">Belongs to the class-I aminoacyl-tRNA synthetase family. TyrS type 1 subfamily.</text>
</comment>
<dbReference type="EC" id="6.1.1.1" evidence="1"/>
<dbReference type="EMBL" id="AE016879">
    <property type="protein sequence ID" value="AAP28976.1"/>
    <property type="molecule type" value="Genomic_DNA"/>
</dbReference>
<dbReference type="EMBL" id="AE017334">
    <property type="protein sequence ID" value="AAT34447.1"/>
    <property type="molecule type" value="Genomic_DNA"/>
</dbReference>
<dbReference type="EMBL" id="AE017225">
    <property type="protein sequence ID" value="AAT57227.1"/>
    <property type="molecule type" value="Genomic_DNA"/>
</dbReference>
<dbReference type="RefSeq" id="NP_847490.1">
    <property type="nucleotide sequence ID" value="NC_003997.3"/>
</dbReference>
<dbReference type="RefSeq" id="YP_031177.1">
    <property type="nucleotide sequence ID" value="NC_005945.1"/>
</dbReference>
<dbReference type="SMR" id="Q81XC6"/>
<dbReference type="STRING" id="261594.GBAA_5314"/>
<dbReference type="DNASU" id="1084812"/>
<dbReference type="GeneID" id="45024921"/>
<dbReference type="KEGG" id="ban:BA_5314"/>
<dbReference type="KEGG" id="banh:HYU01_25975"/>
<dbReference type="KEGG" id="bar:GBAA_5314"/>
<dbReference type="KEGG" id="bat:BAS4936"/>
<dbReference type="PATRIC" id="fig|198094.11.peg.5274"/>
<dbReference type="eggNOG" id="COG0162">
    <property type="taxonomic scope" value="Bacteria"/>
</dbReference>
<dbReference type="HOGENOM" id="CLU_024003_0_3_9"/>
<dbReference type="OMA" id="IIARFHD"/>
<dbReference type="OrthoDB" id="9804243at2"/>
<dbReference type="Proteomes" id="UP000000427">
    <property type="component" value="Chromosome"/>
</dbReference>
<dbReference type="Proteomes" id="UP000000594">
    <property type="component" value="Chromosome"/>
</dbReference>
<dbReference type="GO" id="GO:0005829">
    <property type="term" value="C:cytosol"/>
    <property type="evidence" value="ECO:0007669"/>
    <property type="project" value="TreeGrafter"/>
</dbReference>
<dbReference type="GO" id="GO:0005524">
    <property type="term" value="F:ATP binding"/>
    <property type="evidence" value="ECO:0007669"/>
    <property type="project" value="UniProtKB-UniRule"/>
</dbReference>
<dbReference type="GO" id="GO:0003723">
    <property type="term" value="F:RNA binding"/>
    <property type="evidence" value="ECO:0007669"/>
    <property type="project" value="UniProtKB-KW"/>
</dbReference>
<dbReference type="GO" id="GO:0004831">
    <property type="term" value="F:tyrosine-tRNA ligase activity"/>
    <property type="evidence" value="ECO:0007669"/>
    <property type="project" value="UniProtKB-UniRule"/>
</dbReference>
<dbReference type="GO" id="GO:0006437">
    <property type="term" value="P:tyrosyl-tRNA aminoacylation"/>
    <property type="evidence" value="ECO:0007669"/>
    <property type="project" value="UniProtKB-UniRule"/>
</dbReference>
<dbReference type="CDD" id="cd00165">
    <property type="entry name" value="S4"/>
    <property type="match status" value="1"/>
</dbReference>
<dbReference type="CDD" id="cd00805">
    <property type="entry name" value="TyrRS_core"/>
    <property type="match status" value="1"/>
</dbReference>
<dbReference type="FunFam" id="1.10.240.10:FF:000001">
    <property type="entry name" value="Tyrosine--tRNA ligase"/>
    <property type="match status" value="1"/>
</dbReference>
<dbReference type="FunFam" id="3.40.50.620:FF:000008">
    <property type="entry name" value="Tyrosine--tRNA ligase"/>
    <property type="match status" value="1"/>
</dbReference>
<dbReference type="Gene3D" id="3.40.50.620">
    <property type="entry name" value="HUPs"/>
    <property type="match status" value="1"/>
</dbReference>
<dbReference type="Gene3D" id="3.10.290.10">
    <property type="entry name" value="RNA-binding S4 domain"/>
    <property type="match status" value="1"/>
</dbReference>
<dbReference type="Gene3D" id="1.10.240.10">
    <property type="entry name" value="Tyrosyl-Transfer RNA Synthetase"/>
    <property type="match status" value="1"/>
</dbReference>
<dbReference type="HAMAP" id="MF_02006">
    <property type="entry name" value="Tyr_tRNA_synth_type1"/>
    <property type="match status" value="1"/>
</dbReference>
<dbReference type="InterPro" id="IPR001412">
    <property type="entry name" value="aa-tRNA-synth_I_CS"/>
</dbReference>
<dbReference type="InterPro" id="IPR002305">
    <property type="entry name" value="aa-tRNA-synth_Ic"/>
</dbReference>
<dbReference type="InterPro" id="IPR014729">
    <property type="entry name" value="Rossmann-like_a/b/a_fold"/>
</dbReference>
<dbReference type="InterPro" id="IPR002942">
    <property type="entry name" value="S4_RNA-bd"/>
</dbReference>
<dbReference type="InterPro" id="IPR036986">
    <property type="entry name" value="S4_RNA-bd_sf"/>
</dbReference>
<dbReference type="InterPro" id="IPR054608">
    <property type="entry name" value="SYY-like_C"/>
</dbReference>
<dbReference type="InterPro" id="IPR002307">
    <property type="entry name" value="Tyr-tRNA-ligase"/>
</dbReference>
<dbReference type="InterPro" id="IPR024088">
    <property type="entry name" value="Tyr-tRNA-ligase_bac-type"/>
</dbReference>
<dbReference type="InterPro" id="IPR024107">
    <property type="entry name" value="Tyr-tRNA-ligase_bac_1"/>
</dbReference>
<dbReference type="NCBIfam" id="TIGR00234">
    <property type="entry name" value="tyrS"/>
    <property type="match status" value="1"/>
</dbReference>
<dbReference type="PANTHER" id="PTHR11766:SF0">
    <property type="entry name" value="TYROSINE--TRNA LIGASE, MITOCHONDRIAL"/>
    <property type="match status" value="1"/>
</dbReference>
<dbReference type="PANTHER" id="PTHR11766">
    <property type="entry name" value="TYROSYL-TRNA SYNTHETASE"/>
    <property type="match status" value="1"/>
</dbReference>
<dbReference type="Pfam" id="PF22421">
    <property type="entry name" value="SYY_C-terminal"/>
    <property type="match status" value="1"/>
</dbReference>
<dbReference type="Pfam" id="PF00579">
    <property type="entry name" value="tRNA-synt_1b"/>
    <property type="match status" value="1"/>
</dbReference>
<dbReference type="PRINTS" id="PR01040">
    <property type="entry name" value="TRNASYNTHTYR"/>
</dbReference>
<dbReference type="SMART" id="SM00363">
    <property type="entry name" value="S4"/>
    <property type="match status" value="1"/>
</dbReference>
<dbReference type="SUPFAM" id="SSF55174">
    <property type="entry name" value="Alpha-L RNA-binding motif"/>
    <property type="match status" value="1"/>
</dbReference>
<dbReference type="SUPFAM" id="SSF52374">
    <property type="entry name" value="Nucleotidylyl transferase"/>
    <property type="match status" value="1"/>
</dbReference>
<dbReference type="PROSITE" id="PS00178">
    <property type="entry name" value="AA_TRNA_LIGASE_I"/>
    <property type="match status" value="1"/>
</dbReference>
<dbReference type="PROSITE" id="PS50889">
    <property type="entry name" value="S4"/>
    <property type="match status" value="1"/>
</dbReference>
<proteinExistence type="inferred from homology"/>
<evidence type="ECO:0000255" key="1">
    <source>
        <dbReference type="HAMAP-Rule" id="MF_02006"/>
    </source>
</evidence>
<keyword id="KW-0030">Aminoacyl-tRNA synthetase</keyword>
<keyword id="KW-0067">ATP-binding</keyword>
<keyword id="KW-0963">Cytoplasm</keyword>
<keyword id="KW-0436">Ligase</keyword>
<keyword id="KW-0547">Nucleotide-binding</keyword>
<keyword id="KW-0648">Protein biosynthesis</keyword>
<keyword id="KW-1185">Reference proteome</keyword>
<keyword id="KW-0694">RNA-binding</keyword>
<feature type="chain" id="PRO_0000234668" description="Tyrosine--tRNA ligase 2">
    <location>
        <begin position="1"/>
        <end position="419"/>
    </location>
</feature>
<feature type="domain" description="S4 RNA-binding" evidence="1">
    <location>
        <begin position="352"/>
        <end position="418"/>
    </location>
</feature>
<feature type="short sequence motif" description="'HIGH' region">
    <location>
        <begin position="39"/>
        <end position="48"/>
    </location>
</feature>
<feature type="short sequence motif" description="'KMSKS' region">
    <location>
        <begin position="230"/>
        <end position="234"/>
    </location>
</feature>
<feature type="binding site" evidence="1">
    <location>
        <position position="34"/>
    </location>
    <ligand>
        <name>L-tyrosine</name>
        <dbReference type="ChEBI" id="CHEBI:58315"/>
    </ligand>
</feature>
<feature type="binding site" evidence="1">
    <location>
        <position position="168"/>
    </location>
    <ligand>
        <name>L-tyrosine</name>
        <dbReference type="ChEBI" id="CHEBI:58315"/>
    </ligand>
</feature>
<feature type="binding site" evidence="1">
    <location>
        <position position="172"/>
    </location>
    <ligand>
        <name>L-tyrosine</name>
        <dbReference type="ChEBI" id="CHEBI:58315"/>
    </ligand>
</feature>
<feature type="binding site" evidence="1">
    <location>
        <position position="233"/>
    </location>
    <ligand>
        <name>ATP</name>
        <dbReference type="ChEBI" id="CHEBI:30616"/>
    </ligand>
</feature>
<reference key="1">
    <citation type="journal article" date="2003" name="Nature">
        <title>The genome sequence of Bacillus anthracis Ames and comparison to closely related bacteria.</title>
        <authorList>
            <person name="Read T.D."/>
            <person name="Peterson S.N."/>
            <person name="Tourasse N.J."/>
            <person name="Baillie L.W."/>
            <person name="Paulsen I.T."/>
            <person name="Nelson K.E."/>
            <person name="Tettelin H."/>
            <person name="Fouts D.E."/>
            <person name="Eisen J.A."/>
            <person name="Gill S.R."/>
            <person name="Holtzapple E.K."/>
            <person name="Okstad O.A."/>
            <person name="Helgason E."/>
            <person name="Rilstone J."/>
            <person name="Wu M."/>
            <person name="Kolonay J.F."/>
            <person name="Beanan M.J."/>
            <person name="Dodson R.J."/>
            <person name="Brinkac L.M."/>
            <person name="Gwinn M.L."/>
            <person name="DeBoy R.T."/>
            <person name="Madpu R."/>
            <person name="Daugherty S.C."/>
            <person name="Durkin A.S."/>
            <person name="Haft D.H."/>
            <person name="Nelson W.C."/>
            <person name="Peterson J.D."/>
            <person name="Pop M."/>
            <person name="Khouri H.M."/>
            <person name="Radune D."/>
            <person name="Benton J.L."/>
            <person name="Mahamoud Y."/>
            <person name="Jiang L."/>
            <person name="Hance I.R."/>
            <person name="Weidman J.F."/>
            <person name="Berry K.J."/>
            <person name="Plaut R.D."/>
            <person name="Wolf A.M."/>
            <person name="Watkins K.L."/>
            <person name="Nierman W.C."/>
            <person name="Hazen A."/>
            <person name="Cline R.T."/>
            <person name="Redmond C."/>
            <person name="Thwaite J.E."/>
            <person name="White O."/>
            <person name="Salzberg S.L."/>
            <person name="Thomason B."/>
            <person name="Friedlander A.M."/>
            <person name="Koehler T.M."/>
            <person name="Hanna P.C."/>
            <person name="Kolstoe A.-B."/>
            <person name="Fraser C.M."/>
        </authorList>
    </citation>
    <scope>NUCLEOTIDE SEQUENCE [LARGE SCALE GENOMIC DNA]</scope>
    <source>
        <strain>Ames / isolate Porton</strain>
    </source>
</reference>
<reference key="2">
    <citation type="journal article" date="2009" name="J. Bacteriol.">
        <title>The complete genome sequence of Bacillus anthracis Ames 'Ancestor'.</title>
        <authorList>
            <person name="Ravel J."/>
            <person name="Jiang L."/>
            <person name="Stanley S.T."/>
            <person name="Wilson M.R."/>
            <person name="Decker R.S."/>
            <person name="Read T.D."/>
            <person name="Worsham P."/>
            <person name="Keim P.S."/>
            <person name="Salzberg S.L."/>
            <person name="Fraser-Liggett C.M."/>
            <person name="Rasko D.A."/>
        </authorList>
    </citation>
    <scope>NUCLEOTIDE SEQUENCE [LARGE SCALE GENOMIC DNA]</scope>
    <source>
        <strain>Ames ancestor</strain>
    </source>
</reference>
<reference key="3">
    <citation type="submission" date="2004-01" db="EMBL/GenBank/DDBJ databases">
        <title>Complete genome sequence of Bacillus anthracis Sterne.</title>
        <authorList>
            <person name="Brettin T.S."/>
            <person name="Bruce D."/>
            <person name="Challacombe J.F."/>
            <person name="Gilna P."/>
            <person name="Han C."/>
            <person name="Hill K."/>
            <person name="Hitchcock P."/>
            <person name="Jackson P."/>
            <person name="Keim P."/>
            <person name="Longmire J."/>
            <person name="Lucas S."/>
            <person name="Okinaka R."/>
            <person name="Richardson P."/>
            <person name="Rubin E."/>
            <person name="Tice H."/>
        </authorList>
    </citation>
    <scope>NUCLEOTIDE SEQUENCE [LARGE SCALE GENOMIC DNA]</scope>
    <source>
        <strain>Sterne</strain>
    </source>
</reference>
<name>SYY2_BACAN</name>
<organism>
    <name type="scientific">Bacillus anthracis</name>
    <dbReference type="NCBI Taxonomy" id="1392"/>
    <lineage>
        <taxon>Bacteria</taxon>
        <taxon>Bacillati</taxon>
        <taxon>Bacillota</taxon>
        <taxon>Bacilli</taxon>
        <taxon>Bacillales</taxon>
        <taxon>Bacillaceae</taxon>
        <taxon>Bacillus</taxon>
        <taxon>Bacillus cereus group</taxon>
    </lineage>
</organism>
<sequence>MNIIDELEWRGAVNQQTDEEGLRKLVEEKKISLYCGVDPTGDSMHIGHLIPFMMMKRFQLAGHHPVILIGGATGTIGDPSGRQSERQLQTLEVVQHNVDALTAQMKKLFDFGGNSEVKMVNNYDWTHEINIIEFLRDYGKNFSINSMLAKDIVASRLDTGISFTEFTYQILQAMDFHHLYTKEDVQLQIGGSDQWGNITSGLDLIRKLEGHEAKVFGLTIPLLLKSDGTKFGKSAGGAVWLDPEKTTPFEFYQFWVNTDDRDVVKYLKYFTFLTKERIDELAVKVETEPHKREAQKVLAEEMTKFVHGEEALLQAVKITAALFSGDIKSLTADEIEQGFKEMPTFQSSKETKNIVEWLVDLGIEPSRRQAREDINNGAISMNGEKVTDVGTDVTVENSFDGRFIIIRKGKKNYSLVKLG</sequence>